<accession>Q9BXL7</accession>
<accession>A4D1Z7</accession>
<accession>Q2NKN7</accession>
<accession>Q548H3</accession>
<organism>
    <name type="scientific">Homo sapiens</name>
    <name type="common">Human</name>
    <dbReference type="NCBI Taxonomy" id="9606"/>
    <lineage>
        <taxon>Eukaryota</taxon>
        <taxon>Metazoa</taxon>
        <taxon>Chordata</taxon>
        <taxon>Craniata</taxon>
        <taxon>Vertebrata</taxon>
        <taxon>Euteleostomi</taxon>
        <taxon>Mammalia</taxon>
        <taxon>Eutheria</taxon>
        <taxon>Euarchontoglires</taxon>
        <taxon>Primates</taxon>
        <taxon>Haplorrhini</taxon>
        <taxon>Catarrhini</taxon>
        <taxon>Hominidae</taxon>
        <taxon>Homo</taxon>
    </lineage>
</organism>
<reference key="1">
    <citation type="journal article" date="2001" name="J. Biol. Chem.">
        <title>CARD11 and CARD14 are novel caspase recruitment domain (CARD)/membrane-associated guanylate kinase (MAGUK) family members that interact with Bcl10 and activate NF-kappaB.</title>
        <authorList>
            <person name="Bertin J."/>
            <person name="Wang L."/>
            <person name="Guo Y."/>
            <person name="Jacobson M.D."/>
            <person name="Poyet J.-L."/>
            <person name="Srinivasula S.M."/>
            <person name="Merriam S."/>
            <person name="DiStefano P.S."/>
            <person name="Alnemri E.S."/>
        </authorList>
    </citation>
    <scope>NUCLEOTIDE SEQUENCE [MRNA]</scope>
    <scope>FUNCTION</scope>
    <scope>INTERACTION WITH BCL10</scope>
    <scope>TISSUE SPECIFICITY</scope>
</reference>
<reference key="2">
    <citation type="journal article" date="2003" name="Nature">
        <title>The DNA sequence of human chromosome 7.</title>
        <authorList>
            <person name="Hillier L.W."/>
            <person name="Fulton R.S."/>
            <person name="Fulton L.A."/>
            <person name="Graves T.A."/>
            <person name="Pepin K.H."/>
            <person name="Wagner-McPherson C."/>
            <person name="Layman D."/>
            <person name="Maas J."/>
            <person name="Jaeger S."/>
            <person name="Walker R."/>
            <person name="Wylie K."/>
            <person name="Sekhon M."/>
            <person name="Becker M.C."/>
            <person name="O'Laughlin M.D."/>
            <person name="Schaller M.E."/>
            <person name="Fewell G.A."/>
            <person name="Delehaunty K.D."/>
            <person name="Miner T.L."/>
            <person name="Nash W.E."/>
            <person name="Cordes M."/>
            <person name="Du H."/>
            <person name="Sun H."/>
            <person name="Edwards J."/>
            <person name="Bradshaw-Cordum H."/>
            <person name="Ali J."/>
            <person name="Andrews S."/>
            <person name="Isak A."/>
            <person name="Vanbrunt A."/>
            <person name="Nguyen C."/>
            <person name="Du F."/>
            <person name="Lamar B."/>
            <person name="Courtney L."/>
            <person name="Kalicki J."/>
            <person name="Ozersky P."/>
            <person name="Bielicki L."/>
            <person name="Scott K."/>
            <person name="Holmes A."/>
            <person name="Harkins R."/>
            <person name="Harris A."/>
            <person name="Strong C.M."/>
            <person name="Hou S."/>
            <person name="Tomlinson C."/>
            <person name="Dauphin-Kohlberg S."/>
            <person name="Kozlowicz-Reilly A."/>
            <person name="Leonard S."/>
            <person name="Rohlfing T."/>
            <person name="Rock S.M."/>
            <person name="Tin-Wollam A.-M."/>
            <person name="Abbott A."/>
            <person name="Minx P."/>
            <person name="Maupin R."/>
            <person name="Strowmatt C."/>
            <person name="Latreille P."/>
            <person name="Miller N."/>
            <person name="Johnson D."/>
            <person name="Murray J."/>
            <person name="Woessner J.P."/>
            <person name="Wendl M.C."/>
            <person name="Yang S.-P."/>
            <person name="Schultz B.R."/>
            <person name="Wallis J.W."/>
            <person name="Spieth J."/>
            <person name="Bieri T.A."/>
            <person name="Nelson J.O."/>
            <person name="Berkowicz N."/>
            <person name="Wohldmann P.E."/>
            <person name="Cook L.L."/>
            <person name="Hickenbotham M.T."/>
            <person name="Eldred J."/>
            <person name="Williams D."/>
            <person name="Bedell J.A."/>
            <person name="Mardis E.R."/>
            <person name="Clifton S.W."/>
            <person name="Chissoe S.L."/>
            <person name="Marra M.A."/>
            <person name="Raymond C."/>
            <person name="Haugen E."/>
            <person name="Gillett W."/>
            <person name="Zhou Y."/>
            <person name="James R."/>
            <person name="Phelps K."/>
            <person name="Iadanoto S."/>
            <person name="Bubb K."/>
            <person name="Simms E."/>
            <person name="Levy R."/>
            <person name="Clendenning J."/>
            <person name="Kaul R."/>
            <person name="Kent W.J."/>
            <person name="Furey T.S."/>
            <person name="Baertsch R.A."/>
            <person name="Brent M.R."/>
            <person name="Keibler E."/>
            <person name="Flicek P."/>
            <person name="Bork P."/>
            <person name="Suyama M."/>
            <person name="Bailey J.A."/>
            <person name="Portnoy M.E."/>
            <person name="Torrents D."/>
            <person name="Chinwalla A.T."/>
            <person name="Gish W.R."/>
            <person name="Eddy S.R."/>
            <person name="McPherson J.D."/>
            <person name="Olson M.V."/>
            <person name="Eichler E.E."/>
            <person name="Green E.D."/>
            <person name="Waterston R.H."/>
            <person name="Wilson R.K."/>
        </authorList>
    </citation>
    <scope>NUCLEOTIDE SEQUENCE [LARGE SCALE GENOMIC DNA]</scope>
</reference>
<reference key="3">
    <citation type="journal article" date="2003" name="Science">
        <title>Human chromosome 7: DNA sequence and biology.</title>
        <authorList>
            <person name="Scherer S.W."/>
            <person name="Cheung J."/>
            <person name="MacDonald J.R."/>
            <person name="Osborne L.R."/>
            <person name="Nakabayashi K."/>
            <person name="Herbrick J.-A."/>
            <person name="Carson A.R."/>
            <person name="Parker-Katiraee L."/>
            <person name="Skaug J."/>
            <person name="Khaja R."/>
            <person name="Zhang J."/>
            <person name="Hudek A.K."/>
            <person name="Li M."/>
            <person name="Haddad M."/>
            <person name="Duggan G.E."/>
            <person name="Fernandez B.A."/>
            <person name="Kanematsu E."/>
            <person name="Gentles S."/>
            <person name="Christopoulos C.C."/>
            <person name="Choufani S."/>
            <person name="Kwasnicka D."/>
            <person name="Zheng X.H."/>
            <person name="Lai Z."/>
            <person name="Nusskern D.R."/>
            <person name="Zhang Q."/>
            <person name="Gu Z."/>
            <person name="Lu F."/>
            <person name="Zeesman S."/>
            <person name="Nowaczyk M.J."/>
            <person name="Teshima I."/>
            <person name="Chitayat D."/>
            <person name="Shuman C."/>
            <person name="Weksberg R."/>
            <person name="Zackai E.H."/>
            <person name="Grebe T.A."/>
            <person name="Cox S.R."/>
            <person name="Kirkpatrick S.J."/>
            <person name="Rahman N."/>
            <person name="Friedman J.M."/>
            <person name="Heng H.H.Q."/>
            <person name="Pelicci P.G."/>
            <person name="Lo-Coco F."/>
            <person name="Belloni E."/>
            <person name="Shaffer L.G."/>
            <person name="Pober B."/>
            <person name="Morton C.C."/>
            <person name="Gusella J.F."/>
            <person name="Bruns G.A.P."/>
            <person name="Korf B.R."/>
            <person name="Quade B.J."/>
            <person name="Ligon A.H."/>
            <person name="Ferguson H."/>
            <person name="Higgins A.W."/>
            <person name="Leach N.T."/>
            <person name="Herrick S.R."/>
            <person name="Lemyre E."/>
            <person name="Farra C.G."/>
            <person name="Kim H.-G."/>
            <person name="Summers A.M."/>
            <person name="Gripp K.W."/>
            <person name="Roberts W."/>
            <person name="Szatmari P."/>
            <person name="Winsor E.J.T."/>
            <person name="Grzeschik K.-H."/>
            <person name="Teebi A."/>
            <person name="Minassian B.A."/>
            <person name="Kere J."/>
            <person name="Armengol L."/>
            <person name="Pujana M.A."/>
            <person name="Estivill X."/>
            <person name="Wilson M.D."/>
            <person name="Koop B.F."/>
            <person name="Tosi S."/>
            <person name="Moore G.E."/>
            <person name="Boright A.P."/>
            <person name="Zlotorynski E."/>
            <person name="Kerem B."/>
            <person name="Kroisel P.M."/>
            <person name="Petek E."/>
            <person name="Oscier D.G."/>
            <person name="Mould S.J."/>
            <person name="Doehner H."/>
            <person name="Doehner K."/>
            <person name="Rommens J.M."/>
            <person name="Vincent J.B."/>
            <person name="Venter J.C."/>
            <person name="Li P.W."/>
            <person name="Mural R.J."/>
            <person name="Adams M.D."/>
            <person name="Tsui L.-C."/>
        </authorList>
    </citation>
    <scope>NUCLEOTIDE SEQUENCE [LARGE SCALE GENOMIC DNA]</scope>
</reference>
<reference key="4">
    <citation type="journal article" date="2004" name="Genome Res.">
        <title>The status, quality, and expansion of the NIH full-length cDNA project: the Mammalian Gene Collection (MGC).</title>
        <authorList>
            <consortium name="The MGC Project Team"/>
        </authorList>
    </citation>
    <scope>NUCLEOTIDE SEQUENCE [LARGE SCALE MRNA]</scope>
</reference>
<reference key="5">
    <citation type="journal article" date="2001" name="FEBS Lett.">
        <title>Carma1, a CARD-containing binding partner of Bcl10, induces Bcl10 phosphorylation and NF-kappaB activation.</title>
        <authorList>
            <person name="Gaide O."/>
            <person name="Martinon F."/>
            <person name="Micheau O."/>
            <person name="Bonnet D."/>
            <person name="Thome M."/>
            <person name="Tschopp J."/>
        </authorList>
    </citation>
    <scope>NUCLEOTIDE SEQUENCE [MRNA] OF 8-1154</scope>
    <scope>FUNCTION</scope>
    <scope>INTERACTION WITH BCL10</scope>
</reference>
<reference key="6">
    <citation type="journal article" date="2001" name="FEBS Lett.">
        <authorList>
            <person name="Gaide O."/>
            <person name="Martinon F."/>
            <person name="Micheau O."/>
            <person name="Bonnet D."/>
            <person name="Thome M."/>
            <person name="Tschopp J."/>
        </authorList>
    </citation>
    <scope>ERRATUM OF PUBMED:11356195</scope>
</reference>
<reference key="7">
    <citation type="journal article" date="2002" name="EMBO J.">
        <title>CARD11 mediates factor-specific activation of NF-kappaB by the T cell receptor complex.</title>
        <authorList>
            <person name="Pomerantz J.L."/>
            <person name="Denny E.M."/>
            <person name="Baltimore D."/>
        </authorList>
    </citation>
    <scope>FUNCTION</scope>
</reference>
<reference key="8">
    <citation type="journal article" date="2007" name="J. Biol. Chem.">
        <title>Caveolin-1 triggers T-cell activation via CD26 in association with CARMA1.</title>
        <authorList>
            <person name="Ohnuma K."/>
            <person name="Uchiyama M."/>
            <person name="Yamochi T."/>
            <person name="Nishibashi K."/>
            <person name="Hosono O."/>
            <person name="Takahashi N."/>
            <person name="Kina S."/>
            <person name="Tanaka H."/>
            <person name="Lin X."/>
            <person name="Dang N.H."/>
            <person name="Morimoto C."/>
        </authorList>
    </citation>
    <scope>IDENTIFICATION IN A MEMBRANE RAFT COMPLEX</scope>
    <scope>FUNCTION</scope>
    <scope>INTERACTION WITH DPP4</scope>
    <scope>SUBCELLULAR LOCATION</scope>
    <scope>IDENTIFICATION BY MASS SPECTROMETRY</scope>
</reference>
<reference key="9">
    <citation type="journal article" date="2009" name="Sci. Signal.">
        <title>Quantitative phosphoproteomic analysis of T cell receptor signaling reveals system-wide modulation of protein-protein interactions.</title>
        <authorList>
            <person name="Mayya V."/>
            <person name="Lundgren D.H."/>
            <person name="Hwang S.-I."/>
            <person name="Rezaul K."/>
            <person name="Wu L."/>
            <person name="Eng J.K."/>
            <person name="Rodionov V."/>
            <person name="Han D.K."/>
        </authorList>
    </citation>
    <scope>PHOSPHORYLATION [LARGE SCALE ANALYSIS] AT SER-466; SER-593 AND SER-925</scope>
    <scope>IDENTIFICATION BY MASS SPECTROMETRY [LARGE SCALE ANALYSIS]</scope>
    <source>
        <tissue>Leukemic T-cell</tissue>
    </source>
</reference>
<reference key="10">
    <citation type="journal article" date="2011" name="BMC Syst. Biol.">
        <title>Initial characterization of the human central proteome.</title>
        <authorList>
            <person name="Burkard T.R."/>
            <person name="Planyavsky M."/>
            <person name="Kaupe I."/>
            <person name="Breitwieser F.P."/>
            <person name="Buerckstuemmer T."/>
            <person name="Bennett K.L."/>
            <person name="Superti-Furga G."/>
            <person name="Colinge J."/>
        </authorList>
    </citation>
    <scope>IDENTIFICATION BY MASS SPECTROMETRY [LARGE SCALE ANALYSIS]</scope>
</reference>
<reference key="11">
    <citation type="journal article" date="2013" name="J. Allergy Clin. Immunol.">
        <title>Deficiency of caspase recruitment domain family, member 11 (CARD11), causes profound combined immunodeficiency in human subjects.</title>
        <authorList>
            <person name="Stepensky P."/>
            <person name="Keller B."/>
            <person name="Buchta M."/>
            <person name="Kienzler A.K."/>
            <person name="Elpeleg O."/>
            <person name="Somech R."/>
            <person name="Cohen S."/>
            <person name="Shachar I."/>
            <person name="Miosge L.A."/>
            <person name="Schlesier M."/>
            <person name="Fuchs I."/>
            <person name="Enders A."/>
            <person name="Eibel H."/>
            <person name="Grimbacher B."/>
            <person name="Warnatz K."/>
        </authorList>
    </citation>
    <scope>INVOLVEMENT IN IMD11A</scope>
</reference>
<reference key="12">
    <citation type="journal article" date="2012" name="J. Exp. Med.">
        <title>Congenital B cell lymphocytosis explained by novel germline CARD11 mutations.</title>
        <authorList>
            <person name="Snow A.L."/>
            <person name="Xiao W."/>
            <person name="Stinson J.R."/>
            <person name="Lu W."/>
            <person name="Chaigne-Delalande B."/>
            <person name="Zheng L."/>
            <person name="Pittaluga S."/>
            <person name="Matthews H.F."/>
            <person name="Schmitz R."/>
            <person name="Jhavar S."/>
            <person name="Kuchen S."/>
            <person name="Kardava L."/>
            <person name="Wang W."/>
            <person name="Lamborn I.T."/>
            <person name="Jing H."/>
            <person name="Raffeld M."/>
            <person name="Moir S."/>
            <person name="Fleisher T.A."/>
            <person name="Staudt L.M."/>
            <person name="Su H.C."/>
            <person name="Lenardo M.J."/>
        </authorList>
    </citation>
    <scope>INVOLVEMENT IN BENTA</scope>
    <scope>VARIANTS BENTA SER-123 AND GLY-134</scope>
    <scope>CHARACTERIZATION OF VARIANTS BENTA SER-123 AND GLY-134</scope>
</reference>
<reference key="13">
    <citation type="journal article" date="2013" name="J. Allergy Clin. Immunol.">
        <title>Whole-exome sequencing links caspase recruitment domain 11 (CARD11) inactivation to severe combined immunodeficiency.</title>
        <authorList>
            <person name="Greil J."/>
            <person name="Rausch T."/>
            <person name="Giese T."/>
            <person name="Bandapalli O.R."/>
            <person name="Daniel V."/>
            <person name="Bekeredjian-Ding I."/>
            <person name="Stuetz A.M."/>
            <person name="Drees C."/>
            <person name="Roth S."/>
            <person name="Ruland J."/>
            <person name="Korbel J.O."/>
            <person name="Kulozik A.E."/>
        </authorList>
    </citation>
    <scope>INVOLVEMENT IN IMD11A</scope>
    <scope>VARIANT IMD11A 945-GLN--LEU-1154 DEL</scope>
    <scope>CHARACTERIZATION OF VARIANT IMD11A 945-GLN--LEU-1154 DEL</scope>
</reference>
<reference key="14">
    <citation type="journal article" date="2013" name="J. Proteome Res.">
        <title>Toward a comprehensive characterization of a human cancer cell phosphoproteome.</title>
        <authorList>
            <person name="Zhou H."/>
            <person name="Di Palma S."/>
            <person name="Preisinger C."/>
            <person name="Peng M."/>
            <person name="Polat A.N."/>
            <person name="Heck A.J."/>
            <person name="Mohammed S."/>
        </authorList>
    </citation>
    <scope>PHOSPHORYLATION [LARGE SCALE ANALYSIS] AT SER-448; SER-512; SER-535; SER-593; SER-886 AND SER-925</scope>
    <scope>IDENTIFICATION BY MASS SPECTROMETRY [LARGE SCALE ANALYSIS]</scope>
    <source>
        <tissue>Erythroleukemia</tissue>
    </source>
</reference>
<reference key="15">
    <citation type="journal article" date="2016" name="J. Biol. Chem.">
        <title>Molecular determinants of scaffold-induced linear ubiquitinylation of B Cell Lymphoma/Leukemia 10 (Bcl10) during T cell receptor and oncogenic caspase recruitment domain-containing protein 11 (CARD11) signaling.</title>
        <authorList>
            <person name="Yang Y.K."/>
            <person name="Yang C."/>
            <person name="Chan W."/>
            <person name="Wang Z."/>
            <person name="Deibel K.E."/>
            <person name="Pomerantz J.L."/>
        </authorList>
    </citation>
    <scope>FUNCTION</scope>
    <scope>INTERACTION WITH BCL10</scope>
</reference>
<reference key="16">
    <citation type="journal article" date="2017" name="Nat. Genet.">
        <title>Germline hypomorphic CARD11 mutations in severe atopic disease.</title>
        <authorList>
            <person name="Ma C.A."/>
            <person name="Stinson J.R."/>
            <person name="Zhang Y."/>
            <person name="Abbott J.K."/>
            <person name="Weinreich M.A."/>
            <person name="Hauk P.J."/>
            <person name="Reynolds P.R."/>
            <person name="Lyons J.J."/>
            <person name="Nelson C.G."/>
            <person name="Ruffo E."/>
            <person name="Dorjbal B."/>
            <person name="Glauzy S."/>
            <person name="Yamakawa N."/>
            <person name="Arjunaraja S."/>
            <person name="Voss K."/>
            <person name="Stoddard J."/>
            <person name="Niemela J."/>
            <person name="Zhang Y."/>
            <person name="Rosenzweig S.D."/>
            <person name="McElwee J.J."/>
            <person name="DiMaggio T."/>
            <person name="Matthews H.F."/>
            <person name="Jones N."/>
            <person name="Stone K.D."/>
            <person name="Palma A."/>
            <person name="Oleastro M."/>
            <person name="Prieto E."/>
            <person name="Bernasconi A.R."/>
            <person name="Dubra G."/>
            <person name="Danielian S."/>
            <person name="Zaiat J."/>
            <person name="Marti M.A."/>
            <person name="Kim B."/>
            <person name="Cooper M.A."/>
            <person name="Romberg N."/>
            <person name="Meffre E."/>
            <person name="Gelfand E.W."/>
            <person name="Snow A.L."/>
            <person name="Milner J.D."/>
        </authorList>
    </citation>
    <scope>INVOLVEMENT IN IMD11B</scope>
    <scope>VARIANTS IMD11B ASP-57; PRO-194 AND TRP-975</scope>
    <scope>CHARACTERIZATION OF VARIANTS IMD11B ASP-57; PRO-194 AND TRP-975</scope>
    <scope>CHARACTERIZATION OF VARIANT BENTA GLY-134</scope>
    <scope>FUNCTION</scope>
    <scope>INTERACTION WITH BCL10</scope>
</reference>
<reference key="17">
    <citation type="journal article" date="2019" name="Nat. Commun.">
        <title>Structures of autoinhibited and polymerized forms of CARD9 reveal mechanisms of CARD9 and CARD11 activation.</title>
        <authorList>
            <person name="Holliday M.J."/>
            <person name="Witt A."/>
            <person name="Rodriguez Gama A."/>
            <person name="Walters B.T."/>
            <person name="Arthur C.P."/>
            <person name="Halfmann R."/>
            <person name="Rohou A."/>
            <person name="Dueber E.C."/>
            <person name="Fairbrother W.J."/>
        </authorList>
    </citation>
    <scope>DOMAIN</scope>
    <scope>INTERACTION WITH BCL10</scope>
</reference>
<reference evidence="24" key="18">
    <citation type="journal article" date="2013" name="Mol. Cell">
        <title>Structural architecture of the CARMA1/Bcl10/MALT1 signalosome: nucleation-induced filamentous assembly.</title>
        <authorList>
            <person name="Qiao Q."/>
            <person name="Yang C."/>
            <person name="Zheng C."/>
            <person name="Fontan L."/>
            <person name="David L."/>
            <person name="Yu X."/>
            <person name="Bracken C."/>
            <person name="Rosen M."/>
            <person name="Melnick A."/>
            <person name="Egelman E.H."/>
            <person name="Wu H."/>
        </authorList>
    </citation>
    <scope>X-RAY CRYSTALLOGRAPHY (1.79 ANGSTROMS) OF 18-110</scope>
    <scope>FUNCTION</scope>
    <scope>SUBUNIT</scope>
    <scope>INTERACTION WITH BCL10</scope>
    <scope>IDENTIFICATION IN A CBM COMPLEX</scope>
</reference>
<reference evidence="23" key="19">
    <citation type="journal article" date="2013" name="PLoS ONE">
        <title>Novel disulfide bond-mediated dimerization of the CARD domain was revealed by the crystal structure of CARMA1 CARD.</title>
        <authorList>
            <person name="Jang T.H."/>
            <person name="Park J.H."/>
            <person name="Park H.H."/>
        </authorList>
    </citation>
    <scope>X-RAY CRYSTALLOGRAPHY (3.20 ANGSTROMS) OF 21-116</scope>
    <scope>DISULFIDE BOND</scope>
    <scope>SUBUNIT</scope>
    <scope>MUTAGENESIS OF CYS-28</scope>
</reference>
<proteinExistence type="evidence at protein level"/>
<feature type="chain" id="PRO_0000144086" description="Caspase recruitment domain-containing protein 11">
    <location>
        <begin position="1"/>
        <end position="1154"/>
    </location>
</feature>
<feature type="domain" description="CARD" evidence="3">
    <location>
        <begin position="18"/>
        <end position="110"/>
    </location>
</feature>
<feature type="domain" description="PDZ">
    <location>
        <begin position="667"/>
        <end position="755"/>
    </location>
</feature>
<feature type="domain" description="Guanylate kinase-like">
    <location>
        <begin position="973"/>
        <end position="1140"/>
    </location>
</feature>
<feature type="region of interest" description="Linker" evidence="21">
    <location>
        <begin position="111"/>
        <end position="128"/>
    </location>
</feature>
<feature type="region of interest" description="Inhibitory domain (ID)" evidence="19">
    <location>
        <begin position="450"/>
        <end position="666"/>
    </location>
</feature>
<feature type="region of interest" description="Disordered" evidence="4">
    <location>
        <begin position="460"/>
        <end position="626"/>
    </location>
</feature>
<feature type="coiled-coil region" evidence="2">
    <location>
        <begin position="130"/>
        <end position="449"/>
    </location>
</feature>
<feature type="compositionally biased region" description="Acidic residues" evidence="4">
    <location>
        <begin position="473"/>
        <end position="484"/>
    </location>
</feature>
<feature type="compositionally biased region" description="Basic and acidic residues" evidence="4">
    <location>
        <begin position="518"/>
        <end position="529"/>
    </location>
</feature>
<feature type="compositionally biased region" description="Polar residues" evidence="4">
    <location>
        <begin position="534"/>
        <end position="562"/>
    </location>
</feature>
<feature type="compositionally biased region" description="Basic and acidic residues" evidence="4">
    <location>
        <begin position="573"/>
        <end position="587"/>
    </location>
</feature>
<feature type="compositionally biased region" description="Low complexity" evidence="4">
    <location>
        <begin position="614"/>
        <end position="625"/>
    </location>
</feature>
<feature type="modified residue" description="Phosphoserine" evidence="26">
    <location>
        <position position="448"/>
    </location>
</feature>
<feature type="modified residue" description="Phosphoserine" evidence="25">
    <location>
        <position position="466"/>
    </location>
</feature>
<feature type="modified residue" description="Phosphoserine" evidence="26">
    <location>
        <position position="512"/>
    </location>
</feature>
<feature type="modified residue" description="Phosphoserine" evidence="26">
    <location>
        <position position="535"/>
    </location>
</feature>
<feature type="modified residue" description="Phosphoserine; by PKC/PRKCB and PKC/PRKCQ" evidence="1">
    <location>
        <position position="559"/>
    </location>
</feature>
<feature type="modified residue" description="Phosphoserine" evidence="25 26">
    <location>
        <position position="593"/>
    </location>
</feature>
<feature type="modified residue" description="Phosphoserine; by PKC/PRKCB and PKC/PRKCQ" evidence="1">
    <location>
        <position position="644"/>
    </location>
</feature>
<feature type="modified residue" description="Phosphoserine; by PKC/PRKCB and PKC/PRKCQ" evidence="1">
    <location>
        <position position="652"/>
    </location>
</feature>
<feature type="modified residue" description="Phosphoserine" evidence="26">
    <location>
        <position position="886"/>
    </location>
</feature>
<feature type="modified residue" description="Phosphoserine" evidence="25 26">
    <location>
        <position position="925"/>
    </location>
</feature>
<feature type="disulfide bond" description="Interchain" evidence="13 23">
    <location>
        <position position="28"/>
    </location>
</feature>
<feature type="sequence variant" id="VAR_079284" description="In IMD11B; no effect on protein abundance; decreased interaction with BCL10; dominant negative effect on NF-kappa-B signaling; dominant negative effect on TORC1 signaling." evidence="15">
    <original>E</original>
    <variation>D</variation>
    <location>
        <position position="57"/>
    </location>
</feature>
<feature type="sequence variant" id="VAR_069710" description="In BENTA; results in protein aggregation; constitutive activation of NF-kappa-B signaling; dbSNP:rs387907352." evidence="9">
    <original>G</original>
    <variation>S</variation>
    <location>
        <position position="123"/>
    </location>
</feature>
<feature type="sequence variant" id="VAR_069711" description="In BENTA; results in protein aggregation; constitutive activation of NF-kappa-B signaling; dbSNP:rs387907351." evidence="9 15">
    <original>E</original>
    <variation>G</variation>
    <location>
        <position position="134"/>
    </location>
</feature>
<feature type="sequence variant" id="VAR_079285" description="In IMD11B; no effect on protein abundance; decreased interaction with BCL10; dominant negative effect on NF-kappa-B signaling; dominant negative effect on TORC1 signaling." evidence="15">
    <original>L</original>
    <variation>P</variation>
    <location>
        <position position="194"/>
    </location>
</feature>
<feature type="sequence variant" id="VAR_028117" description="In dbSNP:rs3735134.">
    <original>T</original>
    <variation>M</variation>
    <location>
        <position position="670"/>
    </location>
</feature>
<feature type="sequence variant" id="VAR_028118" description="In dbSNP:rs3735133.">
    <original>S</original>
    <variation>L</variation>
    <location>
        <position position="694"/>
    </location>
</feature>
<feature type="sequence variant" id="VAR_079158" description="In IMD11A; results in defective NF-kappa-B activation." evidence="11">
    <location>
        <begin position="945"/>
        <end position="1154"/>
    </location>
</feature>
<feature type="sequence variant" id="VAR_079286" description="In IMD11B; no effect on protein abundance; dominant negative effect on NF-kappaB signaling; dominant negative effect on TORC1 signaling; dbSNP:rs1064795307." evidence="15">
    <original>R</original>
    <variation>W</variation>
    <location>
        <position position="975"/>
    </location>
</feature>
<feature type="mutagenesis site" description="Abolished homodimerization." evidence="13">
    <original>C</original>
    <variation>A</variation>
    <location>
        <position position="28"/>
    </location>
</feature>
<feature type="sequence conflict" description="In Ref. 1; AAG53402." evidence="20" ref="1">
    <original>L</original>
    <variation>P</variation>
    <location>
        <position position="815"/>
    </location>
</feature>
<feature type="helix" evidence="27">
    <location>
        <begin position="24"/>
        <end position="27"/>
    </location>
</feature>
<feature type="helix" evidence="27">
    <location>
        <begin position="30"/>
        <end position="36"/>
    </location>
</feature>
<feature type="helix" evidence="27">
    <location>
        <begin position="39"/>
        <end position="48"/>
    </location>
</feature>
<feature type="helix" evidence="27">
    <location>
        <begin position="54"/>
        <end position="61"/>
    </location>
</feature>
<feature type="turn" evidence="27">
    <location>
        <begin position="70"/>
        <end position="73"/>
    </location>
</feature>
<feature type="helix" evidence="27">
    <location>
        <begin position="74"/>
        <end position="80"/>
    </location>
</feature>
<feature type="helix" evidence="27">
    <location>
        <begin position="84"/>
        <end position="98"/>
    </location>
</feature>
<feature type="helix" evidence="27">
    <location>
        <begin position="100"/>
        <end position="107"/>
    </location>
</feature>
<sequence length="1154" mass="133284">MPGGGPEMDDYMETLKDEEDALWENVECNRHMLSRYINPAKLTPYLRQCKVIDEQDEDEVLNAPMLPSKINRAGRLLDILHTKGQRGYVVFLESLEFYYPELYKLVTGKEPTRRFSTIVVEEGHEGLTHFLMNEVIKLQQQMKAKDLQRCELLARLRQLEDEKKQMTLTRVELLTFQERYYKMKEERDSYNDELVKVKDDNYNLAMRYAQLSEEKNMAVMRSRDLQLEIDQLKHRLNKMEEECKLERNQSLKLKNDIENRPKKEQVLELERENEMLKTKNQELQSIIQAGKRSLPDSDKAILDILEHDRKEALEDRQELVNRIYNLQEEARQAEELRDKYLEEKEDLELKCSTLGKDCEMYKHRMNTVMLQLEEVERERDQAFHSRDEAQTQYSQCLIEKDKYRKQIRELEEKNDEMRIEMVRREACIVNLESKLRRLSKDSNNLDQSLPRNLPVTIISQDFGDASPRTNGQEADDSSTSEESPEDSKYFLPYHPPQRRMNLKGIQLQRAKSPISLKRTSDFQAKGHEEEGTDASPSSCGSLPITNSFTKMQPPRSRSSIMSITAEPPGNDSIVRRYKEDAPHRSTVEEDNDSGGFDALDLDDDSHERYSFGPSSIHSSSSSHQSEGLDAYDLEQVNLMFRKFSLERPFRPSVTSVGHVRGPGPSVQHTTLNGDSLTSQLTLLGGNARGSFVHSVKPGSLAEKAGLREGHQLLLLEGCIRGERQSVPLDTCTKEEAHWTIQRCSGPVTLHYKVNHEGYRKLVKDMEDGLITSGDSFYIRLNLNISSQLDACTMSLKCDDVVHVRDTMYQDRHEWLCARVDPFTDHDLDMGTIPSYSRAQQLLLVKLQRLMHRGSREEVDGTHHTLRALRNTLQPEEALSTSDPRVSPRLSRASFLFGQLLQFVSRSENKYKRMNSNERVRIISGSPLGSLARSSLDATKLLTEKQEELDPESELGKNLSLIPYSLVRAFYCERRRPVLFTPTVLAKTLVQRLLNSGGAMEFTICKSDIVTRDEFLRRQKTETIIYSREKNPNAFECIAPANIEAVAAKNKHCLLEAGIGCTRDLIKSNIYPIVLFIRVCEKNIKRFRKLLPRPETEEEFLRVCRLKEKELEALPCLYATVEPDMWGSVEELLRVVKDKIGEEQRKTIWVDEDQL</sequence>
<protein>
    <recommendedName>
        <fullName evidence="17">Caspase recruitment domain-containing protein 11</fullName>
    </recommendedName>
    <alternativeName>
        <fullName evidence="18">CARD-containing MAGUK protein 1</fullName>
        <shortName evidence="18">Carma 1</shortName>
    </alternativeName>
</protein>
<dbReference type="EMBL" id="AF322641">
    <property type="protein sequence ID" value="AAG53402.1"/>
    <property type="status" value="ALT_INIT"/>
    <property type="molecule type" value="mRNA"/>
</dbReference>
<dbReference type="EMBL" id="AC004906">
    <property type="protein sequence ID" value="AAQ96893.1"/>
    <property type="status" value="ALT_SEQ"/>
    <property type="molecule type" value="Genomic_DNA"/>
</dbReference>
<dbReference type="EMBL" id="CH236953">
    <property type="protein sequence ID" value="EAL23962.1"/>
    <property type="status" value="ALT_SEQ"/>
    <property type="molecule type" value="Genomic_DNA"/>
</dbReference>
<dbReference type="EMBL" id="BC111719">
    <property type="protein sequence ID" value="AAI11720.2"/>
    <property type="status" value="ALT_INIT"/>
    <property type="molecule type" value="mRNA"/>
</dbReference>
<dbReference type="EMBL" id="AF352576">
    <property type="protein sequence ID" value="AAL34460.1"/>
    <property type="molecule type" value="mRNA"/>
</dbReference>
<dbReference type="CCDS" id="CCDS5336.2"/>
<dbReference type="RefSeq" id="NP_001311210.1">
    <property type="nucleotide sequence ID" value="NM_001324281.3"/>
</dbReference>
<dbReference type="RefSeq" id="NP_115791.3">
    <property type="nucleotide sequence ID" value="NM_032415.5"/>
</dbReference>
<dbReference type="RefSeq" id="XP_011513888.1">
    <property type="nucleotide sequence ID" value="XM_011515586.2"/>
</dbReference>
<dbReference type="PDB" id="4JUP">
    <property type="method" value="X-ray"/>
    <property type="resolution" value="3.20 A"/>
    <property type="chains" value="A/B=21-116"/>
</dbReference>
<dbReference type="PDB" id="4LWD">
    <property type="method" value="X-ray"/>
    <property type="resolution" value="1.79 A"/>
    <property type="chains" value="A=18-110"/>
</dbReference>
<dbReference type="PDBsum" id="4JUP"/>
<dbReference type="PDBsum" id="4LWD"/>
<dbReference type="SMR" id="Q9BXL7"/>
<dbReference type="BioGRID" id="124073">
    <property type="interactions" value="34"/>
</dbReference>
<dbReference type="ComplexPortal" id="CPX-8901">
    <property type="entry name" value="CARD-BCL10-MALT1 complex, CARD11 variant"/>
</dbReference>
<dbReference type="CORUM" id="Q9BXL7"/>
<dbReference type="DIP" id="DIP-41797N"/>
<dbReference type="FunCoup" id="Q9BXL7">
    <property type="interactions" value="321"/>
</dbReference>
<dbReference type="IntAct" id="Q9BXL7">
    <property type="interactions" value="28"/>
</dbReference>
<dbReference type="MINT" id="Q9BXL7"/>
<dbReference type="STRING" id="9606.ENSP00000380150"/>
<dbReference type="GlyGen" id="Q9BXL7">
    <property type="glycosylation" value="2 sites, 1 O-linked glycan (2 sites)"/>
</dbReference>
<dbReference type="iPTMnet" id="Q9BXL7"/>
<dbReference type="PhosphoSitePlus" id="Q9BXL7"/>
<dbReference type="BioMuta" id="CARD11"/>
<dbReference type="DMDM" id="172046231"/>
<dbReference type="jPOST" id="Q9BXL7"/>
<dbReference type="MassIVE" id="Q9BXL7"/>
<dbReference type="PaxDb" id="9606-ENSP00000380150"/>
<dbReference type="PeptideAtlas" id="Q9BXL7"/>
<dbReference type="ProteomicsDB" id="79450"/>
<dbReference type="Pumba" id="Q9BXL7"/>
<dbReference type="Antibodypedia" id="11155">
    <property type="antibodies" value="324 antibodies from 44 providers"/>
</dbReference>
<dbReference type="DNASU" id="84433"/>
<dbReference type="Ensembl" id="ENST00000396946.9">
    <property type="protein sequence ID" value="ENSP00000380150.4"/>
    <property type="gene ID" value="ENSG00000198286.11"/>
</dbReference>
<dbReference type="GeneID" id="84433"/>
<dbReference type="KEGG" id="hsa:84433"/>
<dbReference type="MANE-Select" id="ENST00000396946.9">
    <property type="protein sequence ID" value="ENSP00000380150.4"/>
    <property type="RefSeq nucleotide sequence ID" value="NM_032415.7"/>
    <property type="RefSeq protein sequence ID" value="NP_115791.3"/>
</dbReference>
<dbReference type="UCSC" id="uc003smv.5">
    <property type="organism name" value="human"/>
</dbReference>
<dbReference type="AGR" id="HGNC:16393"/>
<dbReference type="CTD" id="84433"/>
<dbReference type="DisGeNET" id="84433"/>
<dbReference type="GeneCards" id="CARD11"/>
<dbReference type="HGNC" id="HGNC:16393">
    <property type="gene designation" value="CARD11"/>
</dbReference>
<dbReference type="HPA" id="ENSG00000198286">
    <property type="expression patterns" value="Tissue enhanced (intestine, lymphoid tissue)"/>
</dbReference>
<dbReference type="MalaCards" id="CARD11"/>
<dbReference type="MIM" id="607210">
    <property type="type" value="gene"/>
</dbReference>
<dbReference type="MIM" id="615206">
    <property type="type" value="phenotype"/>
</dbReference>
<dbReference type="MIM" id="616452">
    <property type="type" value="phenotype"/>
</dbReference>
<dbReference type="MIM" id="617638">
    <property type="type" value="phenotype"/>
</dbReference>
<dbReference type="neXtProt" id="NX_Q9BXL7"/>
<dbReference type="OpenTargets" id="ENSG00000198286"/>
<dbReference type="Orphanet" id="464336">
    <property type="disease" value="BENTA disease"/>
</dbReference>
<dbReference type="Orphanet" id="619972">
    <property type="disease" value="CADINS disease"/>
</dbReference>
<dbReference type="Orphanet" id="357237">
    <property type="disease" value="Combined immunodeficiency due to CARD11 deficiency"/>
</dbReference>
<dbReference type="Orphanet" id="300324">
    <property type="disease" value="Persistent polyclonal B-cell lymphocytosis"/>
</dbReference>
<dbReference type="PharmGKB" id="PA26073"/>
<dbReference type="VEuPathDB" id="HostDB:ENSG00000198286"/>
<dbReference type="eggNOG" id="KOG0708">
    <property type="taxonomic scope" value="Eukaryota"/>
</dbReference>
<dbReference type="GeneTree" id="ENSGT00940000158573"/>
<dbReference type="HOGENOM" id="CLU_009760_1_0_1"/>
<dbReference type="InParanoid" id="Q9BXL7"/>
<dbReference type="OMA" id="DRYSHGA"/>
<dbReference type="OrthoDB" id="8868836at2759"/>
<dbReference type="PAN-GO" id="Q9BXL7">
    <property type="GO annotations" value="3 GO annotations based on evolutionary models"/>
</dbReference>
<dbReference type="PhylomeDB" id="Q9BXL7"/>
<dbReference type="TreeFam" id="TF351139"/>
<dbReference type="PathwayCommons" id="Q9BXL7"/>
<dbReference type="Reactome" id="R-HSA-1169091">
    <property type="pathway name" value="Activation of NF-kappaB in B cells"/>
</dbReference>
<dbReference type="Reactome" id="R-HSA-202424">
    <property type="pathway name" value="Downstream TCR signaling"/>
</dbReference>
<dbReference type="Reactome" id="R-HSA-2871837">
    <property type="pathway name" value="FCERI mediated NF-kB activation"/>
</dbReference>
<dbReference type="Reactome" id="R-HSA-5607764">
    <property type="pathway name" value="CLEC7A (Dectin-1) signaling"/>
</dbReference>
<dbReference type="SignaLink" id="Q9BXL7"/>
<dbReference type="SIGNOR" id="Q9BXL7"/>
<dbReference type="BioGRID-ORCS" id="84433">
    <property type="hits" value="27 hits in 1166 CRISPR screens"/>
</dbReference>
<dbReference type="ChiTaRS" id="CARD11">
    <property type="organism name" value="human"/>
</dbReference>
<dbReference type="EvolutionaryTrace" id="Q9BXL7"/>
<dbReference type="GeneWiki" id="CARD11"/>
<dbReference type="GenomeRNAi" id="84433"/>
<dbReference type="Pharos" id="Q9BXL7">
    <property type="development level" value="Tbio"/>
</dbReference>
<dbReference type="PRO" id="PR:Q9BXL7"/>
<dbReference type="Proteomes" id="UP000005640">
    <property type="component" value="Chromosome 7"/>
</dbReference>
<dbReference type="RNAct" id="Q9BXL7">
    <property type="molecule type" value="protein"/>
</dbReference>
<dbReference type="Bgee" id="ENSG00000198286">
    <property type="expression patterns" value="Expressed in granulocyte and 156 other cell types or tissues"/>
</dbReference>
<dbReference type="ExpressionAtlas" id="Q9BXL7">
    <property type="expression patterns" value="baseline and differential"/>
</dbReference>
<dbReference type="GO" id="GO:0032449">
    <property type="term" value="C:CBM complex"/>
    <property type="evidence" value="ECO:0000314"/>
    <property type="project" value="UniProtKB"/>
</dbReference>
<dbReference type="GO" id="GO:0005737">
    <property type="term" value="C:cytoplasm"/>
    <property type="evidence" value="ECO:0000314"/>
    <property type="project" value="UniProtKB"/>
</dbReference>
<dbReference type="GO" id="GO:0005829">
    <property type="term" value="C:cytosol"/>
    <property type="evidence" value="ECO:0000304"/>
    <property type="project" value="Reactome"/>
</dbReference>
<dbReference type="GO" id="GO:0070062">
    <property type="term" value="C:extracellular exosome"/>
    <property type="evidence" value="ECO:0007005"/>
    <property type="project" value="UniProtKB"/>
</dbReference>
<dbReference type="GO" id="GO:0001772">
    <property type="term" value="C:immunological synapse"/>
    <property type="evidence" value="ECO:0000318"/>
    <property type="project" value="GO_Central"/>
</dbReference>
<dbReference type="GO" id="GO:0045121">
    <property type="term" value="C:membrane raft"/>
    <property type="evidence" value="ECO:0000314"/>
    <property type="project" value="UniProtKB"/>
</dbReference>
<dbReference type="GO" id="GO:0005886">
    <property type="term" value="C:plasma membrane"/>
    <property type="evidence" value="ECO:0000314"/>
    <property type="project" value="UniProtKB"/>
</dbReference>
<dbReference type="GO" id="GO:0050700">
    <property type="term" value="F:CARD domain binding"/>
    <property type="evidence" value="ECO:0000353"/>
    <property type="project" value="UniProtKB"/>
</dbReference>
<dbReference type="GO" id="GO:0004385">
    <property type="term" value="F:guanylate kinase activity"/>
    <property type="evidence" value="ECO:0000303"/>
    <property type="project" value="UniProtKB"/>
</dbReference>
<dbReference type="GO" id="GO:0030183">
    <property type="term" value="P:B cell differentiation"/>
    <property type="evidence" value="ECO:0007669"/>
    <property type="project" value="Ensembl"/>
</dbReference>
<dbReference type="GO" id="GO:0042100">
    <property type="term" value="P:B cell proliferation"/>
    <property type="evidence" value="ECO:0007669"/>
    <property type="project" value="Ensembl"/>
</dbReference>
<dbReference type="GO" id="GO:0007249">
    <property type="term" value="P:canonical NF-kappaB signal transduction"/>
    <property type="evidence" value="ECO:0000315"/>
    <property type="project" value="UniProtKB"/>
</dbReference>
<dbReference type="GO" id="GO:0035739">
    <property type="term" value="P:CD4-positive, alpha-beta T cell proliferation"/>
    <property type="evidence" value="ECO:0007669"/>
    <property type="project" value="Ensembl"/>
</dbReference>
<dbReference type="GO" id="GO:0048872">
    <property type="term" value="P:homeostasis of number of cells"/>
    <property type="evidence" value="ECO:0007669"/>
    <property type="project" value="Ensembl"/>
</dbReference>
<dbReference type="GO" id="GO:0030890">
    <property type="term" value="P:positive regulation of B cell proliferation"/>
    <property type="evidence" value="ECO:0007669"/>
    <property type="project" value="Ensembl"/>
</dbReference>
<dbReference type="GO" id="GO:0043123">
    <property type="term" value="P:positive regulation of canonical NF-kappaB signal transduction"/>
    <property type="evidence" value="ECO:0000315"/>
    <property type="project" value="UniProtKB"/>
</dbReference>
<dbReference type="GO" id="GO:2000563">
    <property type="term" value="P:positive regulation of CD4-positive, alpha-beta T cell proliferation"/>
    <property type="evidence" value="ECO:0007669"/>
    <property type="project" value="Ensembl"/>
</dbReference>
<dbReference type="GO" id="GO:0032743">
    <property type="term" value="P:positive regulation of interleukin-2 production"/>
    <property type="evidence" value="ECO:0000315"/>
    <property type="project" value="UniProtKB"/>
</dbReference>
<dbReference type="GO" id="GO:0051092">
    <property type="term" value="P:positive regulation of NF-kappaB transcription factor activity"/>
    <property type="evidence" value="ECO:0000314"/>
    <property type="project" value="UniProtKB"/>
</dbReference>
<dbReference type="GO" id="GO:0050862">
    <property type="term" value="P:positive regulation of T cell receptor signaling pathway"/>
    <property type="evidence" value="ECO:0000315"/>
    <property type="project" value="UniProtKB"/>
</dbReference>
<dbReference type="GO" id="GO:0051260">
    <property type="term" value="P:protein homooligomerization"/>
    <property type="evidence" value="ECO:0000314"/>
    <property type="project" value="UniProtKB"/>
</dbReference>
<dbReference type="GO" id="GO:0042981">
    <property type="term" value="P:regulation of apoptotic process"/>
    <property type="evidence" value="ECO:0007669"/>
    <property type="project" value="InterPro"/>
</dbReference>
<dbReference type="GO" id="GO:0045577">
    <property type="term" value="P:regulation of B cell differentiation"/>
    <property type="evidence" value="ECO:0007669"/>
    <property type="project" value="Ensembl"/>
</dbReference>
<dbReference type="GO" id="GO:0045580">
    <property type="term" value="P:regulation of T cell differentiation"/>
    <property type="evidence" value="ECO:0007669"/>
    <property type="project" value="Ensembl"/>
</dbReference>
<dbReference type="GO" id="GO:0031295">
    <property type="term" value="P:T cell costimulation"/>
    <property type="evidence" value="ECO:0000314"/>
    <property type="project" value="UniProtKB"/>
</dbReference>
<dbReference type="GO" id="GO:0045061">
    <property type="term" value="P:thymic T cell selection"/>
    <property type="evidence" value="ECO:0007669"/>
    <property type="project" value="Ensembl"/>
</dbReference>
<dbReference type="GO" id="GO:0038202">
    <property type="term" value="P:TORC1 signaling"/>
    <property type="evidence" value="ECO:0000315"/>
    <property type="project" value="UniProtKB"/>
</dbReference>
<dbReference type="CDD" id="cd08808">
    <property type="entry name" value="CARD_CARD11_CARMA1"/>
    <property type="match status" value="1"/>
</dbReference>
<dbReference type="CDD" id="cd06736">
    <property type="entry name" value="PDZ_CARD11_CARD14-like"/>
    <property type="match status" value="1"/>
</dbReference>
<dbReference type="FunFam" id="2.30.30.40:FF:000148">
    <property type="entry name" value="Caspase recruitment domain family member 11"/>
    <property type="match status" value="1"/>
</dbReference>
<dbReference type="FunFam" id="2.30.42.10:FF:000136">
    <property type="entry name" value="Caspase recruitment domain family member 11"/>
    <property type="match status" value="1"/>
</dbReference>
<dbReference type="FunFam" id="1.10.533.10:FF:000003">
    <property type="entry name" value="Caspase recruitment domain family, member 11"/>
    <property type="match status" value="1"/>
</dbReference>
<dbReference type="FunFam" id="3.40.50.300:FF:000770">
    <property type="entry name" value="Caspase recruitment domain family, member 11"/>
    <property type="match status" value="1"/>
</dbReference>
<dbReference type="Gene3D" id="2.30.42.10">
    <property type="match status" value="1"/>
</dbReference>
<dbReference type="Gene3D" id="1.10.533.10">
    <property type="entry name" value="Death Domain, Fas"/>
    <property type="match status" value="1"/>
</dbReference>
<dbReference type="Gene3D" id="3.40.50.300">
    <property type="entry name" value="P-loop containing nucleotide triphosphate hydrolases"/>
    <property type="match status" value="1"/>
</dbReference>
<dbReference type="Gene3D" id="2.30.30.40">
    <property type="entry name" value="SH3 Domains"/>
    <property type="match status" value="1"/>
</dbReference>
<dbReference type="InterPro" id="IPR001315">
    <property type="entry name" value="CARD"/>
</dbReference>
<dbReference type="InterPro" id="IPR042141">
    <property type="entry name" value="CARD_CARD11"/>
</dbReference>
<dbReference type="InterPro" id="IPR011029">
    <property type="entry name" value="DEATH-like_dom_sf"/>
</dbReference>
<dbReference type="InterPro" id="IPR027417">
    <property type="entry name" value="P-loop_NTPase"/>
</dbReference>
<dbReference type="InterPro" id="IPR036034">
    <property type="entry name" value="PDZ_sf"/>
</dbReference>
<dbReference type="PANTHER" id="PTHR14559">
    <property type="entry name" value="CASPASE RECRUITMENT DOMAIN FAMILY"/>
    <property type="match status" value="1"/>
</dbReference>
<dbReference type="PANTHER" id="PTHR14559:SF4">
    <property type="entry name" value="CASPASE RECRUITMENT DOMAIN-CONTAINING PROTEIN 11"/>
    <property type="match status" value="1"/>
</dbReference>
<dbReference type="Pfam" id="PF00619">
    <property type="entry name" value="CARD"/>
    <property type="match status" value="1"/>
</dbReference>
<dbReference type="SUPFAM" id="SSF47986">
    <property type="entry name" value="DEATH domain"/>
    <property type="match status" value="1"/>
</dbReference>
<dbReference type="SUPFAM" id="SSF52540">
    <property type="entry name" value="P-loop containing nucleoside triphosphate hydrolases"/>
    <property type="match status" value="1"/>
</dbReference>
<dbReference type="SUPFAM" id="SSF50156">
    <property type="entry name" value="PDZ domain-like"/>
    <property type="match status" value="1"/>
</dbReference>
<dbReference type="PROSITE" id="PS50209">
    <property type="entry name" value="CARD"/>
    <property type="match status" value="1"/>
</dbReference>
<name>CAR11_HUMAN</name>
<gene>
    <name evidence="17 22" type="primary">CARD11</name>
    <name evidence="18" type="synonym">CARMA1</name>
</gene>
<comment type="function">
    <text evidence="5 6 7 8 12 14 15">Adapter protein that plays a key role in adaptive immune response by transducing the activation of NF-kappa-B downstream of T-cell receptor (TCR) and B-cell receptor (BCR) engagement (PubMed:11278692, PubMed:11356195, PubMed:12356734). Transduces signals downstream TCR or BCR activation via the formation of a multiprotein complex together with BCL10 and MALT1 that induces NF-kappa-B and MAP kinase p38 (MAPK11, MAPK12, MAPK13 and/or MAPK14) pathways (PubMed:11356195). Upon activation in response to TCR or BCR triggering, CARD11 homooligomerizes to form a nucleating helical template that recruits BCL10 via CARD-CARD interaction, thereby promoting polymerization of BCL10 and subsequent recruitment of MALT1: this leads to I-kappa-B kinase (IKK) phosphorylation and degradation, and release of NF-kappa-B proteins for nuclear translocation (PubMed:24074955). Its binding to DPP4 induces T-cell proliferation and NF-kappa-B activation in a T-cell receptor/CD3-dependent manner (PubMed:17287217). Promotes linear ubiquitination of BCL10 by promoting the targeting of BCL10 to RNF31/HOIP (PubMed:27777308). Stimulates the phosphorylation of BCL10 (PubMed:11356195). Also activates the TORC1 signaling pathway (PubMed:28628108).</text>
</comment>
<comment type="activity regulation">
    <text evidence="1 16">Maintained in an autoinhibited state via homodimerization in which the CARD domain forms an extensive interaction with the adjacent linker and coiled-coil regions (PubMed:31296852). Activation downstream of T-cell receptor (TCR) by phosphorylation by PRKCB and PRKCQ triggers CARD11 homooligomerization and BCL10 recruitment, followed by activation of NF-kappa-B (By similarity).</text>
</comment>
<comment type="subunit">
    <text evidence="5 6 8 12 13 14 15 16">Homodimer; disulfide-linked (PubMed:24224005). Homomultimer; polymerizes following activation, forming a nucleating helical template that seeds BCL10-filament formation via a CARD-CARD interaction (PubMed:24074955). Interacts (via CARD domain) with BCL10 (via CARD domain); interaction takes place following CARD11 activation and polymerization, leading to the formation of a filamentous CBM complex assembly (PubMed:11278692, PubMed:11356195, PubMed:24074955, PubMed:27777308, PubMed:31296852). Component of a CBM complex (CARD11-BCL10-MALT1) complex involved in NF-kappa-B activation (PubMed:24074955, PubMed:28628108). Found in a membrane raft complex, at least composed of BCL10, CARD11, DPP4 and IKBKB (PubMed:17287217). Interacts (via PDZ domain) with DPP4 (via cytoplasmic tail) (PubMed:17287217).</text>
</comment>
<comment type="interaction">
    <interactant intactId="EBI-7006141">
        <id>Q9BXL7</id>
    </interactant>
    <interactant intactId="EBI-958922">
        <id>O95999</id>
        <label>BCL10</label>
    </interactant>
    <organismsDiffer>false</organismsDiffer>
    <experiments>7</experiments>
</comment>
<comment type="interaction">
    <interactant intactId="EBI-7006141">
        <id>Q9BXL7</id>
    </interactant>
    <interactant intactId="EBI-15555129">
        <id>Q13191-1</id>
        <label>CBLB</label>
    </interactant>
    <organismsDiffer>false</organismsDiffer>
    <experiments>4</experiments>
</comment>
<comment type="interaction">
    <interactant intactId="EBI-7006141">
        <id>Q9BXL7</id>
    </interactant>
    <interactant intactId="EBI-1383726">
        <id>P48729</id>
        <label>CSNK1A1</label>
    </interactant>
    <organismsDiffer>false</organismsDiffer>
    <experiments>5</experiments>
</comment>
<comment type="interaction">
    <interactant intactId="EBI-7006141">
        <id>Q9BXL7</id>
    </interactant>
    <interactant intactId="EBI-10106282">
        <id>P48729-1</id>
        <label>CSNK1A1</label>
    </interactant>
    <organismsDiffer>false</organismsDiffer>
    <experiments>5</experiments>
</comment>
<comment type="interaction">
    <interactant intactId="EBI-7006141">
        <id>Q9BXL7</id>
    </interactant>
    <interactant intactId="EBI-1047372">
        <id>Q9UDY8</id>
        <label>MALT1</label>
    </interactant>
    <organismsDiffer>false</organismsDiffer>
    <experiments>2</experiments>
</comment>
<comment type="interaction">
    <interactant intactId="EBI-7006141">
        <id>Q9BXL7</id>
    </interactant>
    <interactant intactId="EBI-704279">
        <id>Q05655</id>
        <label>PRKCD</label>
    </interactant>
    <organismsDiffer>false</organismsDiffer>
    <experiments>7</experiments>
</comment>
<comment type="interaction">
    <interactant intactId="EBI-7006141">
        <id>Q9BXL7</id>
    </interactant>
    <interactant intactId="EBI-2906801">
        <id>P70218</id>
        <label>Map4k1</label>
    </interactant>
    <organismsDiffer>true</organismsDiffer>
    <experiments>2</experiments>
</comment>
<comment type="subcellular location">
    <subcellularLocation>
        <location evidence="8">Cytoplasm</location>
    </subcellularLocation>
    <subcellularLocation>
        <location evidence="8">Membrane raft</location>
    </subcellularLocation>
    <text evidence="8">Colocalized with DPP4 in membrane rafts.</text>
</comment>
<comment type="tissue specificity">
    <text evidence="5">Detected in adult peripheral blood leukocytes, thymus, spleen and liver. Also found in promyelocytic leukemia HL-60 cells, chronic myelogenous leukemia K-562 cells, Burkitt's lymphoma Raji cells and colorectal adenocarcinoma SW480 cells. Not detected in HeLaS3, MOLT-4, A-549 and G431 cells.</text>
</comment>
<comment type="domain">
    <text evidence="16">The linker region, also named autoinhibitory interface, is less inhibitory on its own than that of CARD9 (PubMed:31296852). The linker region together with the inhibitory domain (ID) are required to prevent constitutive activation and maintain CARD11 in an autoinhibitory state (PubMed:31296852). Disruption of the inhibitory domain (ID) region triggers polymerization and activation, leading to formation of BCL10-nucleating filaments (PubMed:31296852).</text>
</comment>
<comment type="PTM">
    <text evidence="1">Phosphorylation at Ser-559, Ser-644 and Ser-652 by PRKCB and PRKCQ leads to a shift from an inactive to an active form that activates the NF-kappa-B signaling.</text>
</comment>
<comment type="disease" evidence="9 15">
    <disease id="DI-04476">
        <name>B-cell expansion with NFKB and T-cell anergy</name>
        <acronym>BENTA</acronym>
        <description>An autosomal dominant condition characterized by onset in infancy of splenomegaly and polyclonal expansion of B cells, resulting in peripheral lymphocytosis. Affected individuals also show mild immune dysfunction, including some defective antibody responses and T-cell anergy. There may be a predisposition to the development of B-cell malignancy.</description>
        <dbReference type="MIM" id="616452"/>
    </disease>
    <text>The disease is caused by variants affecting the gene represented in this entry.</text>
</comment>
<comment type="disease" evidence="10 11">
    <disease id="DI-03761">
        <name>Immunodeficiency 11 A</name>
        <acronym>IMD11A</acronym>
        <description>An autosomal recessive primary immunodeficiency characterized by normal numbers of T and B-lymphocytes, but defective intracellular signaling. There is a block in B-cell differentiation with increased numbers of transitional B-cells and hypogammaglobulinemia, as well as decreased numbers of regulatory T-cells and defects in T-cell function.</description>
        <dbReference type="MIM" id="615206"/>
    </disease>
    <text>The disease is caused by variants affecting the gene represented in this entry.</text>
</comment>
<comment type="disease" evidence="15">
    <disease id="DI-05074">
        <name>Immunodeficiency 11B with atopic dermatitis</name>
        <acronym>IMD11B</acronym>
        <description>An autosomal dominant disorder of immune dysfunction characterized by onset of moderate to severe atopic dermatitis in early childhood. Some patients may have recurrent infections and other variable immune abnormalities. Laboratory studies show defects in T-cell activation, increased IgE, and eosinophilia.</description>
        <dbReference type="MIM" id="617638"/>
    </disease>
    <text>The disease is caused by variants affecting the gene represented in this entry.</text>
</comment>
<comment type="sequence caution" evidence="20">
    <conflict type="erroneous initiation">
        <sequence resource="EMBL-CDS" id="AAG53402"/>
    </conflict>
</comment>
<comment type="sequence caution" evidence="20">
    <conflict type="erroneous initiation">
        <sequence resource="EMBL-CDS" id="AAI11720"/>
    </conflict>
</comment>
<comment type="sequence caution" evidence="20">
    <conflict type="erroneous gene model prediction">
        <sequence resource="EMBL-CDS" id="AAQ96893"/>
    </conflict>
</comment>
<comment type="sequence caution" evidence="20">
    <conflict type="erroneous gene model prediction">
        <sequence resource="EMBL-CDS" id="EAL23962"/>
    </conflict>
</comment>
<keyword id="KW-0002">3D-structure</keyword>
<keyword id="KW-0175">Coiled coil</keyword>
<keyword id="KW-0963">Cytoplasm</keyword>
<keyword id="KW-0225">Disease variant</keyword>
<keyword id="KW-1015">Disulfide bond</keyword>
<keyword id="KW-0391">Immunity</keyword>
<keyword id="KW-1017">Isopeptide bond</keyword>
<keyword id="KW-0472">Membrane</keyword>
<keyword id="KW-0597">Phosphoprotein</keyword>
<keyword id="KW-1267">Proteomics identification</keyword>
<keyword id="KW-1185">Reference proteome</keyword>
<evidence type="ECO:0000250" key="1">
    <source>
        <dbReference type="UniProtKB" id="Q8CIS0"/>
    </source>
</evidence>
<evidence type="ECO:0000255" key="2"/>
<evidence type="ECO:0000255" key="3">
    <source>
        <dbReference type="PROSITE-ProRule" id="PRU00046"/>
    </source>
</evidence>
<evidence type="ECO:0000256" key="4">
    <source>
        <dbReference type="SAM" id="MobiDB-lite"/>
    </source>
</evidence>
<evidence type="ECO:0000269" key="5">
    <source>
    </source>
</evidence>
<evidence type="ECO:0000269" key="6">
    <source>
    </source>
</evidence>
<evidence type="ECO:0000269" key="7">
    <source>
    </source>
</evidence>
<evidence type="ECO:0000269" key="8">
    <source>
    </source>
</evidence>
<evidence type="ECO:0000269" key="9">
    <source>
    </source>
</evidence>
<evidence type="ECO:0000269" key="10">
    <source>
    </source>
</evidence>
<evidence type="ECO:0000269" key="11">
    <source>
    </source>
</evidence>
<evidence type="ECO:0000269" key="12">
    <source>
    </source>
</evidence>
<evidence type="ECO:0000269" key="13">
    <source>
    </source>
</evidence>
<evidence type="ECO:0000269" key="14">
    <source>
    </source>
</evidence>
<evidence type="ECO:0000269" key="15">
    <source>
    </source>
</evidence>
<evidence type="ECO:0000269" key="16">
    <source>
    </source>
</evidence>
<evidence type="ECO:0000303" key="17">
    <source>
    </source>
</evidence>
<evidence type="ECO:0000303" key="18">
    <source>
    </source>
</evidence>
<evidence type="ECO:0000303" key="19">
    <source>
    </source>
</evidence>
<evidence type="ECO:0000305" key="20"/>
<evidence type="ECO:0000305" key="21">
    <source>
    </source>
</evidence>
<evidence type="ECO:0000312" key="22">
    <source>
        <dbReference type="HGNC" id="HGNC:16393"/>
    </source>
</evidence>
<evidence type="ECO:0007744" key="23">
    <source>
        <dbReference type="PDB" id="4JUP"/>
    </source>
</evidence>
<evidence type="ECO:0007744" key="24">
    <source>
        <dbReference type="PDB" id="4LWD"/>
    </source>
</evidence>
<evidence type="ECO:0007744" key="25">
    <source>
    </source>
</evidence>
<evidence type="ECO:0007744" key="26">
    <source>
    </source>
</evidence>
<evidence type="ECO:0007829" key="27">
    <source>
        <dbReference type="PDB" id="4LWD"/>
    </source>
</evidence>